<proteinExistence type="evidence at protein level"/>
<reference key="1">
    <citation type="journal article" date="1998" name="Nature">
        <title>Deciphering the biology of Mycobacterium tuberculosis from the complete genome sequence.</title>
        <authorList>
            <person name="Cole S.T."/>
            <person name="Brosch R."/>
            <person name="Parkhill J."/>
            <person name="Garnier T."/>
            <person name="Churcher C.M."/>
            <person name="Harris D.E."/>
            <person name="Gordon S.V."/>
            <person name="Eiglmeier K."/>
            <person name="Gas S."/>
            <person name="Barry C.E. III"/>
            <person name="Tekaia F."/>
            <person name="Badcock K."/>
            <person name="Basham D."/>
            <person name="Brown D."/>
            <person name="Chillingworth T."/>
            <person name="Connor R."/>
            <person name="Davies R.M."/>
            <person name="Devlin K."/>
            <person name="Feltwell T."/>
            <person name="Gentles S."/>
            <person name="Hamlin N."/>
            <person name="Holroyd S."/>
            <person name="Hornsby T."/>
            <person name="Jagels K."/>
            <person name="Krogh A."/>
            <person name="McLean J."/>
            <person name="Moule S."/>
            <person name="Murphy L.D."/>
            <person name="Oliver S."/>
            <person name="Osborne J."/>
            <person name="Quail M.A."/>
            <person name="Rajandream M.A."/>
            <person name="Rogers J."/>
            <person name="Rutter S."/>
            <person name="Seeger K."/>
            <person name="Skelton S."/>
            <person name="Squares S."/>
            <person name="Squares R."/>
            <person name="Sulston J.E."/>
            <person name="Taylor K."/>
            <person name="Whitehead S."/>
            <person name="Barrell B.G."/>
        </authorList>
    </citation>
    <scope>NUCLEOTIDE SEQUENCE [LARGE SCALE GENOMIC DNA]</scope>
    <source>
        <strain>ATCC 25618 / H37Rv</strain>
    </source>
</reference>
<reference key="2">
    <citation type="journal article" date="2011" name="Mol. Cell. Proteomics">
        <title>Proteogenomic analysis of Mycobacterium tuberculosis by high resolution mass spectrometry.</title>
        <authorList>
            <person name="Kelkar D.S."/>
            <person name="Kumar D."/>
            <person name="Kumar P."/>
            <person name="Balakrishnan L."/>
            <person name="Muthusamy B."/>
            <person name="Yadav A.K."/>
            <person name="Shrivastava P."/>
            <person name="Marimuthu A."/>
            <person name="Anand S."/>
            <person name="Sundaram H."/>
            <person name="Kingsbury R."/>
            <person name="Harsha H.C."/>
            <person name="Nair B."/>
            <person name="Prasad T.S."/>
            <person name="Chauhan D.S."/>
            <person name="Katoch K."/>
            <person name="Katoch V.M."/>
            <person name="Kumar P."/>
            <person name="Chaerkady R."/>
            <person name="Ramachandran S."/>
            <person name="Dash D."/>
            <person name="Pandey A."/>
        </authorList>
    </citation>
    <scope>ACETYLATION [LARGE SCALE ANALYSIS] AT LYS-337</scope>
    <scope>IDENTIFICATION BY MASS SPECTROMETRY [LARGE SCALE ANALYSIS]</scope>
    <source>
        <strain>ATCC 25618 / H37Rv</strain>
    </source>
</reference>
<feature type="chain" id="PRO_0000092521" description="Probable ribonucleotide transport ATP-binding protein mkl">
    <location>
        <begin position="1"/>
        <end position="359"/>
    </location>
</feature>
<feature type="domain" description="ABC transporter" evidence="1">
    <location>
        <begin position="28"/>
        <end position="264"/>
    </location>
</feature>
<feature type="binding site" evidence="1">
    <location>
        <begin position="60"/>
        <end position="67"/>
    </location>
    <ligand>
        <name>ATP</name>
        <dbReference type="ChEBI" id="CHEBI:30616"/>
    </ligand>
</feature>
<feature type="modified residue" description="N6-acetyllysine" evidence="3">
    <location>
        <position position="337"/>
    </location>
</feature>
<gene>
    <name type="primary">mkl</name>
    <name type="ordered locus">Rv0655</name>
    <name type="ORF">MTCI376.21</name>
</gene>
<organism>
    <name type="scientific">Mycobacterium tuberculosis (strain ATCC 25618 / H37Rv)</name>
    <dbReference type="NCBI Taxonomy" id="83332"/>
    <lineage>
        <taxon>Bacteria</taxon>
        <taxon>Bacillati</taxon>
        <taxon>Actinomycetota</taxon>
        <taxon>Actinomycetes</taxon>
        <taxon>Mycobacteriales</taxon>
        <taxon>Mycobacteriaceae</taxon>
        <taxon>Mycobacterium</taxon>
        <taxon>Mycobacterium tuberculosis complex</taxon>
    </lineage>
</organism>
<sequence length="359" mass="39394">MRYSDSYHTTGRWQPRASTEGFPMGVSIEVNGLTKSFGSSRIWEDVTLTIPAGEVSVLLGPSGTGKSVFLKSLIGLLRPERGSIIIDGTDIIECSAKELYEIRTLFGVLFQDGALFGSMNLYDNTAFPLREHTKKKESEIRDIVMEKLALVGLGGDEKKFPGEISGGMRKRAGLARALVLDPQIILCDEPDSGLDPVRTAYLSQLIMDINAQIDATILIVTHNINIARTVPDNMGMLFRKHLVMFGPREVLLTSDEPVVRQFLNGRRIGPIGMSEEKDEATMAEEQALLDAGHHAGGVEEIEGVPPQISATPGMPERKAVARRQARVREMLHTLPKKAQAAILDDLEGTHKYAVHEIGQ</sequence>
<evidence type="ECO:0000255" key="1">
    <source>
        <dbReference type="PROSITE-ProRule" id="PRU00434"/>
    </source>
</evidence>
<evidence type="ECO:0000305" key="2"/>
<evidence type="ECO:0007744" key="3">
    <source>
    </source>
</evidence>
<accession>P9WQL5</accession>
<accession>L0T762</accession>
<accession>O06784</accession>
<accession>P63357</accession>
<name>MKL_MYCTU</name>
<keyword id="KW-0007">Acetylation</keyword>
<keyword id="KW-0067">ATP-binding</keyword>
<keyword id="KW-0547">Nucleotide-binding</keyword>
<keyword id="KW-1185">Reference proteome</keyword>
<keyword id="KW-0813">Transport</keyword>
<comment type="function">
    <text>Not known, could be involved in the transport of ribonucleotides.</text>
</comment>
<comment type="similarity">
    <text evidence="2">Belongs to the ABC transporter superfamily.</text>
</comment>
<protein>
    <recommendedName>
        <fullName>Probable ribonucleotide transport ATP-binding protein mkl</fullName>
    </recommendedName>
</protein>
<dbReference type="EMBL" id="AL123456">
    <property type="protein sequence ID" value="CCP43398.1"/>
    <property type="molecule type" value="Genomic_DNA"/>
</dbReference>
<dbReference type="PIR" id="B70534">
    <property type="entry name" value="B70534"/>
</dbReference>
<dbReference type="RefSeq" id="NP_215169.1">
    <property type="nucleotide sequence ID" value="NC_000962.3"/>
</dbReference>
<dbReference type="RefSeq" id="WP_003403363.1">
    <property type="nucleotide sequence ID" value="NC_000962.3"/>
</dbReference>
<dbReference type="SMR" id="P9WQL5"/>
<dbReference type="FunCoup" id="P9WQL5">
    <property type="interactions" value="203"/>
</dbReference>
<dbReference type="STRING" id="83332.Rv0655"/>
<dbReference type="iPTMnet" id="P9WQL5"/>
<dbReference type="PaxDb" id="83332-Rv0655"/>
<dbReference type="DNASU" id="888081"/>
<dbReference type="GeneID" id="888081"/>
<dbReference type="KEGG" id="mtu:Rv0655"/>
<dbReference type="KEGG" id="mtv:RVBD_0655"/>
<dbReference type="PATRIC" id="fig|83332.111.peg.727"/>
<dbReference type="TubercuList" id="Rv0655"/>
<dbReference type="eggNOG" id="COG1135">
    <property type="taxonomic scope" value="Bacteria"/>
</dbReference>
<dbReference type="InParanoid" id="P9WQL5"/>
<dbReference type="OrthoDB" id="9802264at2"/>
<dbReference type="PhylomeDB" id="P9WQL5"/>
<dbReference type="Proteomes" id="UP000001584">
    <property type="component" value="Chromosome"/>
</dbReference>
<dbReference type="GO" id="GO:0009274">
    <property type="term" value="C:peptidoglycan-based cell wall"/>
    <property type="evidence" value="ECO:0007005"/>
    <property type="project" value="MTBBASE"/>
</dbReference>
<dbReference type="GO" id="GO:0005886">
    <property type="term" value="C:plasma membrane"/>
    <property type="evidence" value="ECO:0007005"/>
    <property type="project" value="MTBBASE"/>
</dbReference>
<dbReference type="GO" id="GO:0005524">
    <property type="term" value="F:ATP binding"/>
    <property type="evidence" value="ECO:0007669"/>
    <property type="project" value="UniProtKB-KW"/>
</dbReference>
<dbReference type="GO" id="GO:0016887">
    <property type="term" value="F:ATP hydrolysis activity"/>
    <property type="evidence" value="ECO:0007669"/>
    <property type="project" value="InterPro"/>
</dbReference>
<dbReference type="GO" id="GO:0070508">
    <property type="term" value="P:cholesterol import"/>
    <property type="evidence" value="ECO:0000314"/>
    <property type="project" value="MTBBASE"/>
</dbReference>
<dbReference type="CDD" id="cd03261">
    <property type="entry name" value="ABC_Org_Solvent_Resistant"/>
    <property type="match status" value="1"/>
</dbReference>
<dbReference type="FunFam" id="3.40.50.300:FF:000192">
    <property type="entry name" value="Phospholipid ABC transporter ATP-binding protein MlaF"/>
    <property type="match status" value="1"/>
</dbReference>
<dbReference type="Gene3D" id="3.40.50.300">
    <property type="entry name" value="P-loop containing nucleotide triphosphate hydrolases"/>
    <property type="match status" value="1"/>
</dbReference>
<dbReference type="InterPro" id="IPR003593">
    <property type="entry name" value="AAA+_ATPase"/>
</dbReference>
<dbReference type="InterPro" id="IPR003439">
    <property type="entry name" value="ABC_transporter-like_ATP-bd"/>
</dbReference>
<dbReference type="InterPro" id="IPR017871">
    <property type="entry name" value="ABC_transporter-like_CS"/>
</dbReference>
<dbReference type="InterPro" id="IPR027417">
    <property type="entry name" value="P-loop_NTPase"/>
</dbReference>
<dbReference type="PANTHER" id="PTHR43023:SF6">
    <property type="entry name" value="INTERMEMBRANE PHOSPHOLIPID TRANSPORT SYSTEM ATP-BINDING PROTEIN MLAF"/>
    <property type="match status" value="1"/>
</dbReference>
<dbReference type="PANTHER" id="PTHR43023">
    <property type="entry name" value="PROTEIN TRIGALACTOSYLDIACYLGLYCEROL 3, CHLOROPLASTIC"/>
    <property type="match status" value="1"/>
</dbReference>
<dbReference type="Pfam" id="PF00005">
    <property type="entry name" value="ABC_tran"/>
    <property type="match status" value="1"/>
</dbReference>
<dbReference type="SMART" id="SM00382">
    <property type="entry name" value="AAA"/>
    <property type="match status" value="1"/>
</dbReference>
<dbReference type="SUPFAM" id="SSF52540">
    <property type="entry name" value="P-loop containing nucleoside triphosphate hydrolases"/>
    <property type="match status" value="1"/>
</dbReference>
<dbReference type="PROSITE" id="PS00211">
    <property type="entry name" value="ABC_TRANSPORTER_1"/>
    <property type="match status" value="1"/>
</dbReference>
<dbReference type="PROSITE" id="PS50893">
    <property type="entry name" value="ABC_TRANSPORTER_2"/>
    <property type="match status" value="1"/>
</dbReference>